<keyword id="KW-0150">Chloroplast</keyword>
<keyword id="KW-0249">Electron transport</keyword>
<keyword id="KW-0349">Heme</keyword>
<keyword id="KW-0408">Iron</keyword>
<keyword id="KW-0472">Membrane</keyword>
<keyword id="KW-0479">Metal-binding</keyword>
<keyword id="KW-0602">Photosynthesis</keyword>
<keyword id="KW-0934">Plastid</keyword>
<keyword id="KW-0732">Signal</keyword>
<keyword id="KW-0793">Thylakoid</keyword>
<keyword id="KW-0812">Transmembrane</keyword>
<keyword id="KW-1133">Transmembrane helix</keyword>
<keyword id="KW-0813">Transport</keyword>
<sequence>MTRSISISVLIISVLIMIYVITRTSISNAYPIFAQQGYENPREATGRIVCANCHLANKPVDIEVPQAVLPNTVFEAVVRIPYDMQLKQVLANGKRGGLNVGAVLILPEGFELAPPDRISPEMKEKMGNLSFQNYRPTKRNILVIGPVPGQKYSEIVFPILSPDPATKKEVHFLKYPIYVGGNRGRGQIYPDGSKSNNTVYNATGAGLVSKIVRKEKGGYEITIADASDGHQAVDIIPPGPELLVSEGEYIKLDQPLTSNPNVGGFGQGDAEIVLQDPLRVQGLLFFLASVILAQIFLVLKKKQFEKVQLAEMNF</sequence>
<organism>
    <name type="scientific">Illicium oligandrum</name>
    <name type="common">Star anise</name>
    <dbReference type="NCBI Taxonomy" id="145286"/>
    <lineage>
        <taxon>Eukaryota</taxon>
        <taxon>Viridiplantae</taxon>
        <taxon>Streptophyta</taxon>
        <taxon>Embryophyta</taxon>
        <taxon>Tracheophyta</taxon>
        <taxon>Spermatophyta</taxon>
        <taxon>Magnoliopsida</taxon>
        <taxon>Austrobaileyales</taxon>
        <taxon>Schisandraceae</taxon>
        <taxon>Illicium</taxon>
    </lineage>
</organism>
<dbReference type="EMBL" id="EF380354">
    <property type="protein sequence ID" value="ABQ52532.1"/>
    <property type="molecule type" value="Genomic_DNA"/>
</dbReference>
<dbReference type="RefSeq" id="YP_001294283.1">
    <property type="nucleotide sequence ID" value="NC_009600.1"/>
</dbReference>
<dbReference type="SMR" id="A6MMV7"/>
<dbReference type="GeneID" id="5236788"/>
<dbReference type="GO" id="GO:0009535">
    <property type="term" value="C:chloroplast thylakoid membrane"/>
    <property type="evidence" value="ECO:0007669"/>
    <property type="project" value="UniProtKB-SubCell"/>
</dbReference>
<dbReference type="GO" id="GO:0009055">
    <property type="term" value="F:electron transfer activity"/>
    <property type="evidence" value="ECO:0007669"/>
    <property type="project" value="UniProtKB-UniRule"/>
</dbReference>
<dbReference type="GO" id="GO:0020037">
    <property type="term" value="F:heme binding"/>
    <property type="evidence" value="ECO:0007669"/>
    <property type="project" value="InterPro"/>
</dbReference>
<dbReference type="GO" id="GO:0005506">
    <property type="term" value="F:iron ion binding"/>
    <property type="evidence" value="ECO:0007669"/>
    <property type="project" value="InterPro"/>
</dbReference>
<dbReference type="GO" id="GO:0015979">
    <property type="term" value="P:photosynthesis"/>
    <property type="evidence" value="ECO:0007669"/>
    <property type="project" value="UniProtKB-UniRule"/>
</dbReference>
<dbReference type="FunFam" id="1.20.5.700:FF:000001">
    <property type="entry name" value="Cytochrome f"/>
    <property type="match status" value="1"/>
</dbReference>
<dbReference type="FunFam" id="2.40.50.100:FF:000007">
    <property type="entry name" value="Cytochrome f"/>
    <property type="match status" value="1"/>
</dbReference>
<dbReference type="FunFam" id="2.60.40.830:FF:000001">
    <property type="entry name" value="Cytochrome f"/>
    <property type="match status" value="1"/>
</dbReference>
<dbReference type="Gene3D" id="2.40.50.100">
    <property type="match status" value="1"/>
</dbReference>
<dbReference type="Gene3D" id="2.60.40.830">
    <property type="entry name" value="Cytochrome f large domain"/>
    <property type="match status" value="1"/>
</dbReference>
<dbReference type="Gene3D" id="1.20.5.700">
    <property type="entry name" value="Single helix bin"/>
    <property type="match status" value="1"/>
</dbReference>
<dbReference type="HAMAP" id="MF_00610">
    <property type="entry name" value="Cytb6_f_cytF"/>
    <property type="match status" value="1"/>
</dbReference>
<dbReference type="InterPro" id="IPR024058">
    <property type="entry name" value="Cyt-f_TM"/>
</dbReference>
<dbReference type="InterPro" id="IPR002325">
    <property type="entry name" value="Cyt_f"/>
</dbReference>
<dbReference type="InterPro" id="IPR024094">
    <property type="entry name" value="Cyt_f_lg_dom"/>
</dbReference>
<dbReference type="InterPro" id="IPR036826">
    <property type="entry name" value="Cyt_f_lg_dom_sf"/>
</dbReference>
<dbReference type="InterPro" id="IPR011054">
    <property type="entry name" value="Rudment_hybrid_motif"/>
</dbReference>
<dbReference type="PANTHER" id="PTHR33288">
    <property type="match status" value="1"/>
</dbReference>
<dbReference type="PANTHER" id="PTHR33288:SF10">
    <property type="entry name" value="CYTOCHROME F"/>
    <property type="match status" value="1"/>
</dbReference>
<dbReference type="Pfam" id="PF01333">
    <property type="entry name" value="Apocytochr_F_C"/>
    <property type="match status" value="1"/>
</dbReference>
<dbReference type="Pfam" id="PF16639">
    <property type="entry name" value="Apocytochr_F_N"/>
    <property type="match status" value="1"/>
</dbReference>
<dbReference type="PRINTS" id="PR00610">
    <property type="entry name" value="CYTOCHROMEF"/>
</dbReference>
<dbReference type="SUPFAM" id="SSF103431">
    <property type="entry name" value="Cytochrome f subunit of the cytochrome b6f complex, transmembrane anchor"/>
    <property type="match status" value="1"/>
</dbReference>
<dbReference type="SUPFAM" id="SSF49441">
    <property type="entry name" value="Cytochrome f, large domain"/>
    <property type="match status" value="1"/>
</dbReference>
<dbReference type="SUPFAM" id="SSF51246">
    <property type="entry name" value="Rudiment single hybrid motif"/>
    <property type="match status" value="1"/>
</dbReference>
<dbReference type="PROSITE" id="PS51010">
    <property type="entry name" value="CYTF"/>
    <property type="match status" value="1"/>
</dbReference>
<accession>A6MMV7</accession>
<proteinExistence type="inferred from homology"/>
<reference key="1">
    <citation type="journal article" date="2007" name="Mol. Phylogenet. Evol.">
        <title>Phylogenetic and evolutionary implications of complete chloroplast genome sequences of four early-diverging angiosperms: Buxus (Buxaceae), Chloranthus (Chloranthaceae), Dioscorea (Dioscoreaceae), and Illicium (Schisandraceae).</title>
        <authorList>
            <person name="Hansen D.R."/>
            <person name="Dastidar S.G."/>
            <person name="Cai Z."/>
            <person name="Penaflor C."/>
            <person name="Kuehl J.V."/>
            <person name="Boore J.L."/>
            <person name="Jansen R.K."/>
        </authorList>
    </citation>
    <scope>NUCLEOTIDE SEQUENCE [LARGE SCALE GENOMIC DNA]</scope>
</reference>
<comment type="function">
    <text evidence="2">Component of the cytochrome b6-f complex, which mediates electron transfer between photosystem II (PSII) and photosystem I (PSI), cyclic electron flow around PSI, and state transitions.</text>
</comment>
<comment type="cofactor">
    <cofactor evidence="2">
        <name>heme</name>
        <dbReference type="ChEBI" id="CHEBI:30413"/>
    </cofactor>
    <text evidence="2">Binds 1 heme group covalently.</text>
</comment>
<comment type="subunit">
    <text evidence="1">The 4 large subunits of the cytochrome b6-f complex are cytochrome b6, subunit IV (17 kDa polypeptide, petD), cytochrome f and the Rieske protein, while the 4 small subunits are PetG, PetL, PetM and PetN. The complex functions as a dimer (By similarity).</text>
</comment>
<comment type="subcellular location">
    <subcellularLocation>
        <location evidence="2">Plastid</location>
        <location evidence="2">Chloroplast thylakoid membrane</location>
        <topology evidence="2">Single-pass membrane protein</topology>
    </subcellularLocation>
</comment>
<comment type="similarity">
    <text evidence="2">Belongs to the cytochrome f family.</text>
</comment>
<protein>
    <recommendedName>
        <fullName evidence="2">Cytochrome f</fullName>
    </recommendedName>
</protein>
<feature type="signal peptide" evidence="2">
    <location>
        <begin position="1"/>
        <end position="29"/>
    </location>
</feature>
<feature type="chain" id="PRO_0000342065" description="Cytochrome f">
    <location>
        <begin position="30"/>
        <end position="314"/>
    </location>
</feature>
<feature type="transmembrane region" description="Helical" evidence="2">
    <location>
        <begin position="280"/>
        <end position="300"/>
    </location>
</feature>
<feature type="binding site" description="axial binding residue" evidence="2">
    <location>
        <position position="30"/>
    </location>
    <ligand>
        <name>heme</name>
        <dbReference type="ChEBI" id="CHEBI:30413"/>
    </ligand>
    <ligandPart>
        <name>Fe</name>
        <dbReference type="ChEBI" id="CHEBI:18248"/>
    </ligandPart>
</feature>
<feature type="binding site" description="covalent" evidence="2">
    <location>
        <position position="50"/>
    </location>
    <ligand>
        <name>heme</name>
        <dbReference type="ChEBI" id="CHEBI:30413"/>
    </ligand>
</feature>
<feature type="binding site" description="covalent" evidence="2">
    <location>
        <position position="53"/>
    </location>
    <ligand>
        <name>heme</name>
        <dbReference type="ChEBI" id="CHEBI:30413"/>
    </ligand>
</feature>
<feature type="binding site" description="axial binding residue" evidence="2">
    <location>
        <position position="54"/>
    </location>
    <ligand>
        <name>heme</name>
        <dbReference type="ChEBI" id="CHEBI:30413"/>
    </ligand>
    <ligandPart>
        <name>Fe</name>
        <dbReference type="ChEBI" id="CHEBI:18248"/>
    </ligandPart>
</feature>
<gene>
    <name evidence="2" type="primary">petA</name>
</gene>
<name>CYF_ILLOL</name>
<geneLocation type="chloroplast"/>
<evidence type="ECO:0000250" key="1"/>
<evidence type="ECO:0000255" key="2">
    <source>
        <dbReference type="HAMAP-Rule" id="MF_00610"/>
    </source>
</evidence>